<comment type="function">
    <text evidence="2">Antioxidant protein with alkyl hydroperoxidase activity. Required for the reduction of the AhpC active site cysteine residues and for the regeneration of the AhpC enzyme activity.</text>
</comment>
<comment type="catalytic activity">
    <reaction evidence="2">
        <text>N(6)-[(R)-dihydrolipoyl]-L-lysyl-[lipoyl-carrier protein] + a hydroperoxide = N(6)-[(R)-lipoyl]-L-lysyl-[lipoyl-carrier protein] + an alcohol + H2O</text>
        <dbReference type="Rhea" id="RHEA:62636"/>
        <dbReference type="Rhea" id="RHEA-COMP:10502"/>
        <dbReference type="Rhea" id="RHEA-COMP:16355"/>
        <dbReference type="ChEBI" id="CHEBI:15377"/>
        <dbReference type="ChEBI" id="CHEBI:30879"/>
        <dbReference type="ChEBI" id="CHEBI:35924"/>
        <dbReference type="ChEBI" id="CHEBI:83099"/>
        <dbReference type="ChEBI" id="CHEBI:83100"/>
        <dbReference type="EC" id="1.11.1.28"/>
    </reaction>
</comment>
<comment type="subunit">
    <text evidence="2">Homotrimer.</text>
</comment>
<comment type="similarity">
    <text evidence="2">Belongs to the AhpD family.</text>
</comment>
<name>AHPD_MYCPA</name>
<sequence length="178" mass="18842">MSVENLKEALPEYAKDLKLNLGSITRTTELNEEQLWGTLLASAAATRNTQVLTEIGAEAADTLSAEAYHAALGAASVMAMNNVFYRGRGFLDGKYDDLRAGLRMNIIGNPGVEKANFELWCFAVSAINGCPDCVASHEHTLREAGVSRETIQEALKAAAIISGVAQAIVASQTLATAG</sequence>
<organism>
    <name type="scientific">Mycolicibacterium paratuberculosis (strain ATCC BAA-968 / K-10)</name>
    <name type="common">Mycobacterium paratuberculosis</name>
    <dbReference type="NCBI Taxonomy" id="262316"/>
    <lineage>
        <taxon>Bacteria</taxon>
        <taxon>Bacillati</taxon>
        <taxon>Actinomycetota</taxon>
        <taxon>Actinomycetes</taxon>
        <taxon>Mycobacteriales</taxon>
        <taxon>Mycobacteriaceae</taxon>
        <taxon>Mycobacterium</taxon>
        <taxon>Mycobacterium avium complex (MAC)</taxon>
    </lineage>
</organism>
<gene>
    <name evidence="2" type="primary">ahpD</name>
    <name type="ordered locus">MAP_1588c</name>
</gene>
<reference key="1">
    <citation type="journal article" date="2005" name="Proc. Natl. Acad. Sci. U.S.A.">
        <title>The complete genome sequence of Mycobacterium avium subspecies paratuberculosis.</title>
        <authorList>
            <person name="Li L."/>
            <person name="Bannantine J.P."/>
            <person name="Zhang Q."/>
            <person name="Amonsin A."/>
            <person name="May B.J."/>
            <person name="Alt D."/>
            <person name="Banerji N."/>
            <person name="Kanjilal S."/>
            <person name="Kapur V."/>
        </authorList>
    </citation>
    <scope>NUCLEOTIDE SEQUENCE [LARGE SCALE GENOMIC DNA]</scope>
    <source>
        <strain>ATCC BAA-968 / K-10</strain>
    </source>
</reference>
<evidence type="ECO:0000250" key="1"/>
<evidence type="ECO:0000255" key="2">
    <source>
        <dbReference type="HAMAP-Rule" id="MF_01676"/>
    </source>
</evidence>
<keyword id="KW-0049">Antioxidant</keyword>
<keyword id="KW-1015">Disulfide bond</keyword>
<keyword id="KW-0560">Oxidoreductase</keyword>
<keyword id="KW-0575">Peroxidase</keyword>
<keyword id="KW-0676">Redox-active center</keyword>
<keyword id="KW-1185">Reference proteome</keyword>
<feature type="chain" id="PRO_0000359499" description="Alkyl hydroperoxide reductase AhpD">
    <location>
        <begin position="1"/>
        <end position="178"/>
    </location>
</feature>
<feature type="active site" description="Proton donor" evidence="2">
    <location>
        <position position="130"/>
    </location>
</feature>
<feature type="active site" description="Cysteine sulfenic acid (-SOH) intermediate" evidence="2">
    <location>
        <position position="133"/>
    </location>
</feature>
<feature type="disulfide bond" evidence="1">
    <location>
        <begin position="130"/>
        <end position="133"/>
    </location>
</feature>
<feature type="disulfide bond" description="Interchain (with AhpC); in linked form" evidence="2">
    <location>
        <position position="133"/>
    </location>
</feature>
<dbReference type="EC" id="1.11.1.28" evidence="2"/>
<dbReference type="EMBL" id="AE016958">
    <property type="protein sequence ID" value="AAS03905.1"/>
    <property type="molecule type" value="Genomic_DNA"/>
</dbReference>
<dbReference type="RefSeq" id="WP_003876554.1">
    <property type="nucleotide sequence ID" value="NZ_CP106873.1"/>
</dbReference>
<dbReference type="SMR" id="Q73ZL4"/>
<dbReference type="STRING" id="262316.MAP_1588c"/>
<dbReference type="PeroxiBase" id="4582">
    <property type="entry name" value="MavpAhpD"/>
</dbReference>
<dbReference type="KEGG" id="mpa:MAP_1588c"/>
<dbReference type="eggNOG" id="COG0599">
    <property type="taxonomic scope" value="Bacteria"/>
</dbReference>
<dbReference type="HOGENOM" id="CLU_105328_0_0_11"/>
<dbReference type="Proteomes" id="UP000000580">
    <property type="component" value="Chromosome"/>
</dbReference>
<dbReference type="GO" id="GO:0008785">
    <property type="term" value="F:alkyl hydroperoxide reductase activity"/>
    <property type="evidence" value="ECO:0007669"/>
    <property type="project" value="UniProtKB-UniRule"/>
</dbReference>
<dbReference type="GO" id="GO:0015036">
    <property type="term" value="F:disulfide oxidoreductase activity"/>
    <property type="evidence" value="ECO:0007669"/>
    <property type="project" value="TreeGrafter"/>
</dbReference>
<dbReference type="GO" id="GO:0032843">
    <property type="term" value="F:hydroperoxide reductase activity"/>
    <property type="evidence" value="ECO:0007669"/>
    <property type="project" value="InterPro"/>
</dbReference>
<dbReference type="GO" id="GO:0051920">
    <property type="term" value="F:peroxiredoxin activity"/>
    <property type="evidence" value="ECO:0007669"/>
    <property type="project" value="InterPro"/>
</dbReference>
<dbReference type="GO" id="GO:0045454">
    <property type="term" value="P:cell redox homeostasis"/>
    <property type="evidence" value="ECO:0007669"/>
    <property type="project" value="TreeGrafter"/>
</dbReference>
<dbReference type="GO" id="GO:0006979">
    <property type="term" value="P:response to oxidative stress"/>
    <property type="evidence" value="ECO:0007669"/>
    <property type="project" value="InterPro"/>
</dbReference>
<dbReference type="Gene3D" id="1.20.1290.10">
    <property type="entry name" value="AhpD-like"/>
    <property type="match status" value="1"/>
</dbReference>
<dbReference type="HAMAP" id="MF_01676">
    <property type="entry name" value="AhpD"/>
    <property type="match status" value="1"/>
</dbReference>
<dbReference type="InterPro" id="IPR004674">
    <property type="entry name" value="AhpD"/>
</dbReference>
<dbReference type="InterPro" id="IPR029032">
    <property type="entry name" value="AhpD-like"/>
</dbReference>
<dbReference type="InterPro" id="IPR004675">
    <property type="entry name" value="AhpD_core"/>
</dbReference>
<dbReference type="InterPro" id="IPR003779">
    <property type="entry name" value="CMD-like"/>
</dbReference>
<dbReference type="NCBIfam" id="TIGR00777">
    <property type="entry name" value="ahpD"/>
    <property type="match status" value="1"/>
</dbReference>
<dbReference type="NCBIfam" id="TIGR00778">
    <property type="entry name" value="ahpD_dom"/>
    <property type="match status" value="1"/>
</dbReference>
<dbReference type="PANTHER" id="PTHR33930">
    <property type="entry name" value="ALKYL HYDROPEROXIDE REDUCTASE AHPD"/>
    <property type="match status" value="1"/>
</dbReference>
<dbReference type="PANTHER" id="PTHR33930:SF7">
    <property type="entry name" value="ALKYL HYDROPEROXIDE REDUCTASE AHPD"/>
    <property type="match status" value="1"/>
</dbReference>
<dbReference type="Pfam" id="PF02627">
    <property type="entry name" value="CMD"/>
    <property type="match status" value="1"/>
</dbReference>
<dbReference type="SUPFAM" id="SSF69118">
    <property type="entry name" value="AhpD-like"/>
    <property type="match status" value="1"/>
</dbReference>
<accession>Q73ZL4</accession>
<protein>
    <recommendedName>
        <fullName evidence="2">Alkyl hydroperoxide reductase AhpD</fullName>
        <ecNumber evidence="2">1.11.1.28</ecNumber>
    </recommendedName>
    <alternativeName>
        <fullName evidence="2">Alkylhydroperoxidase AhpD</fullName>
    </alternativeName>
</protein>
<proteinExistence type="inferred from homology"/>